<name>FCTA_ECOSE</name>
<accession>B6I6S5</accession>
<keyword id="KW-0808">Transferase</keyword>
<comment type="function">
    <text evidence="1">Involved in the catabolism of oxalate and in the adapatation to low pH via the induction of the oxalate-dependent acid tolerance response (ATR). Catalyzes the transfer of the CoA moiety from formyl-CoA to oxalate (By similarity).</text>
</comment>
<comment type="catalytic activity">
    <reaction evidence="2">
        <text>formyl-CoA + oxalate = oxalyl-CoA + formate</text>
        <dbReference type="Rhea" id="RHEA:16545"/>
        <dbReference type="ChEBI" id="CHEBI:15740"/>
        <dbReference type="ChEBI" id="CHEBI:30623"/>
        <dbReference type="ChEBI" id="CHEBI:57376"/>
        <dbReference type="ChEBI" id="CHEBI:57388"/>
        <dbReference type="EC" id="2.8.3.16"/>
    </reaction>
</comment>
<comment type="pathway">
    <text evidence="2">Metabolic intermediate degradation; oxalate degradation; CO(2) and formate from oxalate: step 1/2.</text>
</comment>
<comment type="subunit">
    <text evidence="2">Homodimer.</text>
</comment>
<comment type="similarity">
    <text evidence="2">Belongs to the CoA-transferase III family. Frc subfamily.</text>
</comment>
<feature type="chain" id="PRO_1000189579" description="Formyl-CoA:oxalate CoA-transferase">
    <location>
        <begin position="1"/>
        <end position="416"/>
    </location>
</feature>
<feature type="active site" description="Nucleophile" evidence="2">
    <location>
        <position position="169"/>
    </location>
</feature>
<feature type="binding site" evidence="1">
    <location>
        <begin position="17"/>
        <end position="18"/>
    </location>
    <ligand>
        <name>CoA</name>
        <dbReference type="ChEBI" id="CHEBI:57287"/>
    </ligand>
</feature>
<feature type="binding site" evidence="2">
    <location>
        <position position="38"/>
    </location>
    <ligand>
        <name>CoA</name>
        <dbReference type="ChEBI" id="CHEBI:57287"/>
    </ligand>
</feature>
<feature type="binding site" evidence="1">
    <location>
        <begin position="72"/>
        <end position="75"/>
    </location>
    <ligand>
        <name>CoA</name>
        <dbReference type="ChEBI" id="CHEBI:57287"/>
    </ligand>
</feature>
<feature type="binding site" evidence="1">
    <location>
        <begin position="96"/>
        <end position="98"/>
    </location>
    <ligand>
        <name>CoA</name>
        <dbReference type="ChEBI" id="CHEBI:57287"/>
    </ligand>
</feature>
<feature type="binding site" evidence="2">
    <location>
        <position position="104"/>
    </location>
    <ligand>
        <name>CoA</name>
        <dbReference type="ChEBI" id="CHEBI:57287"/>
    </ligand>
</feature>
<feature type="binding site" evidence="1">
    <location>
        <begin position="137"/>
        <end position="140"/>
    </location>
    <ligand>
        <name>CoA</name>
        <dbReference type="ChEBI" id="CHEBI:57287"/>
    </ligand>
</feature>
<feature type="binding site" evidence="1">
    <location>
        <begin position="248"/>
        <end position="250"/>
    </location>
    <ligand>
        <name>substrate</name>
    </ligand>
</feature>
<feature type="binding site" evidence="1">
    <location>
        <begin position="273"/>
        <end position="275"/>
    </location>
    <ligand>
        <name>CoA</name>
        <dbReference type="ChEBI" id="CHEBI:57287"/>
    </ligand>
</feature>
<gene>
    <name evidence="2" type="primary">frc</name>
    <name type="ordered locus">ECSE_2671</name>
</gene>
<protein>
    <recommendedName>
        <fullName>Formyl-CoA:oxalate CoA-transferase</fullName>
        <shortName>FCOCT</shortName>
        <ecNumber evidence="2">2.8.3.16</ecNumber>
    </recommendedName>
    <alternativeName>
        <fullName evidence="2">Formyl-coenzyme A transferase</fullName>
        <shortName evidence="2">Formyl-CoA transferase</shortName>
    </alternativeName>
</protein>
<proteinExistence type="inferred from homology"/>
<sequence length="416" mass="45828">MSTPLQGIKVLDFTGVQSGPSCTQMLAWFGADVIKIERPGVGDVTRHQLRDIPDIDALYFTMLNSNKRSIELNTKTAEGKEVMEKLIREADILVENFHPGAIDHMGFTWEHIQEINPRLIFGSIKGFDECSPYVNVKAYENVAQAAGGAASTTGFWDGPPLVSAAALGDSNTGMHLLIGLLAALLHREKTGRGQRVTMSMQDAVLNLCRVKLRDQQRLDKLGYLEEYPQYPNGTFGDAVPRGGNAGGGGQPGWILKCKGWETDPNAYIYFTIQEQNWENTCKAIGKPEWITDPAYSTAHARQPHIFDIFAEIEKYTVTIDKHEAVAYLTQFDIPCAPVLSMKEISLDPSLRQSGSVVEVEQPLRGKYLTVGCPMKFSAFTPDIKAAPLLGEHTAAVLQELGYSDDEIAAMKQNHAI</sequence>
<evidence type="ECO:0000250" key="1"/>
<evidence type="ECO:0000255" key="2">
    <source>
        <dbReference type="HAMAP-Rule" id="MF_00742"/>
    </source>
</evidence>
<dbReference type="EC" id="2.8.3.16" evidence="2"/>
<dbReference type="EMBL" id="AP009240">
    <property type="protein sequence ID" value="BAG78195.1"/>
    <property type="molecule type" value="Genomic_DNA"/>
</dbReference>
<dbReference type="RefSeq" id="WP_000106759.1">
    <property type="nucleotide sequence ID" value="NC_011415.1"/>
</dbReference>
<dbReference type="SMR" id="B6I6S5"/>
<dbReference type="GeneID" id="75202557"/>
<dbReference type="KEGG" id="ecy:ECSE_2671"/>
<dbReference type="HOGENOM" id="CLU_033975_2_1_6"/>
<dbReference type="UniPathway" id="UPA00540">
    <property type="reaction ID" value="UER00598"/>
</dbReference>
<dbReference type="Proteomes" id="UP000008199">
    <property type="component" value="Chromosome"/>
</dbReference>
<dbReference type="GO" id="GO:0033608">
    <property type="term" value="F:formyl-CoA transferase activity"/>
    <property type="evidence" value="ECO:0007669"/>
    <property type="project" value="UniProtKB-EC"/>
</dbReference>
<dbReference type="GO" id="GO:0033611">
    <property type="term" value="P:oxalate catabolic process"/>
    <property type="evidence" value="ECO:0007669"/>
    <property type="project" value="UniProtKB-UniRule"/>
</dbReference>
<dbReference type="Gene3D" id="3.40.50.10540">
    <property type="entry name" value="Crotonobetainyl-coa:carnitine coa-transferase, domain 1"/>
    <property type="match status" value="1"/>
</dbReference>
<dbReference type="Gene3D" id="3.30.1540.10">
    <property type="entry name" value="formyl-coa transferase, domain 3"/>
    <property type="match status" value="1"/>
</dbReference>
<dbReference type="HAMAP" id="MF_00742">
    <property type="entry name" value="Formyl_CoA_transfer"/>
    <property type="match status" value="1"/>
</dbReference>
<dbReference type="InterPro" id="IPR050483">
    <property type="entry name" value="CoA-transferase_III_domain"/>
</dbReference>
<dbReference type="InterPro" id="IPR003673">
    <property type="entry name" value="CoA-Trfase_fam_III"/>
</dbReference>
<dbReference type="InterPro" id="IPR044855">
    <property type="entry name" value="CoA-Trfase_III_dom3_sf"/>
</dbReference>
<dbReference type="InterPro" id="IPR023606">
    <property type="entry name" value="CoA-Trfase_III_dom_1_sf"/>
</dbReference>
<dbReference type="InterPro" id="IPR017659">
    <property type="entry name" value="Formyl_CoA_transfer"/>
</dbReference>
<dbReference type="NCBIfam" id="TIGR03253">
    <property type="entry name" value="oxalate_frc"/>
    <property type="match status" value="1"/>
</dbReference>
<dbReference type="NCBIfam" id="NF003809">
    <property type="entry name" value="PRK05398.1"/>
    <property type="match status" value="1"/>
</dbReference>
<dbReference type="PANTHER" id="PTHR48207">
    <property type="entry name" value="SUCCINATE--HYDROXYMETHYLGLUTARATE COA-TRANSFERASE"/>
    <property type="match status" value="1"/>
</dbReference>
<dbReference type="PANTHER" id="PTHR48207:SF3">
    <property type="entry name" value="SUCCINATE--HYDROXYMETHYLGLUTARATE COA-TRANSFERASE"/>
    <property type="match status" value="1"/>
</dbReference>
<dbReference type="Pfam" id="PF02515">
    <property type="entry name" value="CoA_transf_3"/>
    <property type="match status" value="1"/>
</dbReference>
<dbReference type="SUPFAM" id="SSF89796">
    <property type="entry name" value="CoA-transferase family III (CaiB/BaiF)"/>
    <property type="match status" value="1"/>
</dbReference>
<organism>
    <name type="scientific">Escherichia coli (strain SE11)</name>
    <dbReference type="NCBI Taxonomy" id="409438"/>
    <lineage>
        <taxon>Bacteria</taxon>
        <taxon>Pseudomonadati</taxon>
        <taxon>Pseudomonadota</taxon>
        <taxon>Gammaproteobacteria</taxon>
        <taxon>Enterobacterales</taxon>
        <taxon>Enterobacteriaceae</taxon>
        <taxon>Escherichia</taxon>
    </lineage>
</organism>
<reference key="1">
    <citation type="journal article" date="2008" name="DNA Res.">
        <title>Complete genome sequence and comparative analysis of the wild-type commensal Escherichia coli strain SE11 isolated from a healthy adult.</title>
        <authorList>
            <person name="Oshima K."/>
            <person name="Toh H."/>
            <person name="Ogura Y."/>
            <person name="Sasamoto H."/>
            <person name="Morita H."/>
            <person name="Park S.-H."/>
            <person name="Ooka T."/>
            <person name="Iyoda S."/>
            <person name="Taylor T.D."/>
            <person name="Hayashi T."/>
            <person name="Itoh K."/>
            <person name="Hattori M."/>
        </authorList>
    </citation>
    <scope>NUCLEOTIDE SEQUENCE [LARGE SCALE GENOMIC DNA]</scope>
    <source>
        <strain>SE11</strain>
    </source>
</reference>